<feature type="transit peptide" description="Chloroplast" evidence="2">
    <location>
        <begin position="1"/>
        <end position="7"/>
    </location>
</feature>
<feature type="chain" id="PRO_0000007180" description="Betaine aldehyde dehydrogenase, chloroplastic">
    <location>
        <begin position="8"/>
        <end position="502"/>
    </location>
</feature>
<feature type="active site" description="Proton acceptor" evidence="3 4">
    <location>
        <position position="262"/>
    </location>
</feature>
<feature type="active site" description="Nucleophile" evidence="3 4">
    <location>
        <position position="296"/>
    </location>
</feature>
<feature type="binding site" evidence="1">
    <location>
        <begin position="240"/>
        <end position="245"/>
    </location>
    <ligand>
        <name>NAD(+)</name>
        <dbReference type="ChEBI" id="CHEBI:57540"/>
    </ligand>
</feature>
<feature type="site" description="Transition state stabilizer" evidence="1">
    <location>
        <position position="164"/>
    </location>
</feature>
<reference key="1">
    <citation type="journal article" date="1995" name="Chin. Sci. Bull.">
        <title>cDNA and partial genomic DNA sequence of Mountain spinach (Atriplex hortenis) betaine aldehyde dehydrogenase (BADH).</title>
        <authorList>
            <person name="Xiao G."/>
            <person name="Zhang G."/>
            <person name="Liu F."/>
            <person name="Chen S."/>
        </authorList>
    </citation>
    <scope>NUCLEOTIDE SEQUENCE [GENOMIC DNA / MRNA]</scope>
    <source>
        <tissue>Leaf</tissue>
        <tissue>Stem</tissue>
    </source>
</reference>
<protein>
    <recommendedName>
        <fullName>Betaine aldehyde dehydrogenase, chloroplastic</fullName>
        <shortName>BADH</shortName>
        <ecNumber>1.2.1.8</ecNumber>
    </recommendedName>
</protein>
<accession>P42757</accession>
<organism>
    <name type="scientific">Atriplex hortensis</name>
    <name type="common">Mountain spinach</name>
    <dbReference type="NCBI Taxonomy" id="34272"/>
    <lineage>
        <taxon>Eukaryota</taxon>
        <taxon>Viridiplantae</taxon>
        <taxon>Streptophyta</taxon>
        <taxon>Embryophyta</taxon>
        <taxon>Tracheophyta</taxon>
        <taxon>Spermatophyta</taxon>
        <taxon>Magnoliopsida</taxon>
        <taxon>eudicotyledons</taxon>
        <taxon>Gunneridae</taxon>
        <taxon>Pentapetalae</taxon>
        <taxon>Caryophyllales</taxon>
        <taxon>Chenopodiaceae</taxon>
        <taxon>Chenopodioideae</taxon>
        <taxon>Atripliceae</taxon>
        <taxon>Atriplex</taxon>
    </lineage>
</organism>
<dbReference type="EC" id="1.2.1.8"/>
<dbReference type="EMBL" id="X69770">
    <property type="protein sequence ID" value="CAA49425.1"/>
    <property type="molecule type" value="mRNA"/>
</dbReference>
<dbReference type="EMBL" id="X69772">
    <property type="protein sequence ID" value="CAA49427.1"/>
    <property type="molecule type" value="Genomic_DNA"/>
</dbReference>
<dbReference type="PIR" id="S49205">
    <property type="entry name" value="S49205"/>
</dbReference>
<dbReference type="SMR" id="P42757"/>
<dbReference type="UniPathway" id="UPA00529">
    <property type="reaction ID" value="UER00386"/>
</dbReference>
<dbReference type="GO" id="GO:0009507">
    <property type="term" value="C:chloroplast"/>
    <property type="evidence" value="ECO:0007669"/>
    <property type="project" value="UniProtKB-SubCell"/>
</dbReference>
<dbReference type="GO" id="GO:0019145">
    <property type="term" value="F:aminobutyraldehyde dehydrogenase (NAD+) activity"/>
    <property type="evidence" value="ECO:0007669"/>
    <property type="project" value="UniProtKB-ARBA"/>
</dbReference>
<dbReference type="GO" id="GO:0008802">
    <property type="term" value="F:betaine-aldehyde dehydrogenase (NAD+) activity"/>
    <property type="evidence" value="ECO:0007669"/>
    <property type="project" value="UniProtKB-EC"/>
</dbReference>
<dbReference type="GO" id="GO:0110095">
    <property type="term" value="P:cellular detoxification of aldehyde"/>
    <property type="evidence" value="ECO:0007669"/>
    <property type="project" value="UniProtKB-ARBA"/>
</dbReference>
<dbReference type="GO" id="GO:0019285">
    <property type="term" value="P:glycine betaine biosynthetic process from choline"/>
    <property type="evidence" value="ECO:0007669"/>
    <property type="project" value="UniProtKB-UniPathway"/>
</dbReference>
<dbReference type="CDD" id="cd07110">
    <property type="entry name" value="ALDH_F10_BADH"/>
    <property type="match status" value="1"/>
</dbReference>
<dbReference type="FunFam" id="3.40.309.10:FF:000012">
    <property type="entry name" value="Betaine aldehyde dehydrogenase"/>
    <property type="match status" value="1"/>
</dbReference>
<dbReference type="FunFam" id="3.40.605.10:FF:000007">
    <property type="entry name" value="NAD/NADP-dependent betaine aldehyde dehydrogenase"/>
    <property type="match status" value="1"/>
</dbReference>
<dbReference type="Gene3D" id="3.40.605.10">
    <property type="entry name" value="Aldehyde Dehydrogenase, Chain A, domain 1"/>
    <property type="match status" value="1"/>
</dbReference>
<dbReference type="Gene3D" id="3.40.309.10">
    <property type="entry name" value="Aldehyde Dehydrogenase, Chain A, domain 2"/>
    <property type="match status" value="1"/>
</dbReference>
<dbReference type="InterPro" id="IPR016161">
    <property type="entry name" value="Ald_DH/histidinol_DH"/>
</dbReference>
<dbReference type="InterPro" id="IPR016163">
    <property type="entry name" value="Ald_DH_C"/>
</dbReference>
<dbReference type="InterPro" id="IPR016160">
    <property type="entry name" value="Ald_DH_CS_CYS"/>
</dbReference>
<dbReference type="InterPro" id="IPR029510">
    <property type="entry name" value="Ald_DH_CS_GLU"/>
</dbReference>
<dbReference type="InterPro" id="IPR016162">
    <property type="entry name" value="Ald_DH_N"/>
</dbReference>
<dbReference type="InterPro" id="IPR015590">
    <property type="entry name" value="Aldehyde_DH_dom"/>
</dbReference>
<dbReference type="PANTHER" id="PTHR43860">
    <property type="entry name" value="BETAINE ALDEHYDE DEHYDROGENASE"/>
    <property type="match status" value="1"/>
</dbReference>
<dbReference type="PANTHER" id="PTHR43860:SF2">
    <property type="entry name" value="BETAINE ALDEHYDE DEHYDROGENASE-RELATED"/>
    <property type="match status" value="1"/>
</dbReference>
<dbReference type="Pfam" id="PF00171">
    <property type="entry name" value="Aldedh"/>
    <property type="match status" value="1"/>
</dbReference>
<dbReference type="SUPFAM" id="SSF53720">
    <property type="entry name" value="ALDH-like"/>
    <property type="match status" value="1"/>
</dbReference>
<dbReference type="PROSITE" id="PS00070">
    <property type="entry name" value="ALDEHYDE_DEHYDR_CYS"/>
    <property type="match status" value="1"/>
</dbReference>
<dbReference type="PROSITE" id="PS00687">
    <property type="entry name" value="ALDEHYDE_DEHYDR_GLU"/>
    <property type="match status" value="1"/>
</dbReference>
<sequence length="502" mass="55271">MAFPIPARQLFIDGEWREPLLKNRIPIINPSTEEIIGDIPAATAEDVEVAVVAARKAFKRNKGRDWAALWSHRAKYLRAIAAKITEKKDHFVKLETLDSGKPRDEAVLDIDDVATCFEYFEYFAGQAEALDAKQKAPVTLPMERFKSHVLRQPIGVVGLISPWNYPLLMDTWKIAPALAAGCTTVLKPSELASVTCLEFGEVCNEVGLPPGVLNILTGLGPDAGAPIVSHPDIDKVAFTGSSATGSKIMASAAQLVKPVTLELGGKSPVIMFEDIDIETAVEWTLFGVFWTNGQICSATSRLLVHESIAAEFVDRMVKWTKNIKISDPFEEGCRLGPVISKGQYDKIMKFISTAKSEGATILCGGSRPEHLKKGYYIEPTIITDITTSMQIWKEEVFGPVICVKTFKTEDEAIELANDTEYGLAGAVFSKDLERCERVTKALEVGAVWVNCSQPCFVHAPWGGVKRSGFGRELGEWGIENYLNIKQVTSDISDEPWGWYKSP</sequence>
<evidence type="ECO:0000250" key="1"/>
<evidence type="ECO:0000255" key="2"/>
<evidence type="ECO:0000255" key="3">
    <source>
        <dbReference type="PROSITE-ProRule" id="PRU10007"/>
    </source>
</evidence>
<evidence type="ECO:0000255" key="4">
    <source>
        <dbReference type="PROSITE-ProRule" id="PRU10008"/>
    </source>
</evidence>
<evidence type="ECO:0000305" key="5"/>
<name>BADH_ATRHO</name>
<proteinExistence type="evidence at transcript level"/>
<comment type="catalytic activity">
    <reaction>
        <text>betaine aldehyde + NAD(+) + H2O = glycine betaine + NADH + 2 H(+)</text>
        <dbReference type="Rhea" id="RHEA:15305"/>
        <dbReference type="ChEBI" id="CHEBI:15377"/>
        <dbReference type="ChEBI" id="CHEBI:15378"/>
        <dbReference type="ChEBI" id="CHEBI:15710"/>
        <dbReference type="ChEBI" id="CHEBI:17750"/>
        <dbReference type="ChEBI" id="CHEBI:57540"/>
        <dbReference type="ChEBI" id="CHEBI:57945"/>
        <dbReference type="EC" id="1.2.1.8"/>
    </reaction>
</comment>
<comment type="pathway">
    <text>Amine and polyamine biosynthesis; betaine biosynthesis via choline pathway; betaine from betaine aldehyde: step 1/1.</text>
</comment>
<comment type="subunit">
    <text evidence="1">Homodimer.</text>
</comment>
<comment type="subcellular location">
    <subcellularLocation>
        <location>Plastid</location>
        <location>Chloroplast</location>
    </subcellularLocation>
</comment>
<comment type="similarity">
    <text evidence="5">Belongs to the aldehyde dehydrogenase family.</text>
</comment>
<keyword id="KW-0150">Chloroplast</keyword>
<keyword id="KW-0520">NAD</keyword>
<keyword id="KW-0560">Oxidoreductase</keyword>
<keyword id="KW-0934">Plastid</keyword>
<keyword id="KW-0809">Transit peptide</keyword>